<dbReference type="EC" id="2.7.8.13" evidence="1"/>
<dbReference type="EMBL" id="AM236080">
    <property type="protein sequence ID" value="CAK08797.1"/>
    <property type="molecule type" value="Genomic_DNA"/>
</dbReference>
<dbReference type="RefSeq" id="WP_003541415.1">
    <property type="nucleotide sequence ID" value="NC_008380.1"/>
</dbReference>
<dbReference type="SMR" id="Q1ME30"/>
<dbReference type="EnsemblBacteria" id="CAK08797">
    <property type="protein sequence ID" value="CAK08797"/>
    <property type="gene ID" value="RL3310"/>
</dbReference>
<dbReference type="GeneID" id="84670874"/>
<dbReference type="KEGG" id="rle:RL3310"/>
<dbReference type="eggNOG" id="COG0472">
    <property type="taxonomic scope" value="Bacteria"/>
</dbReference>
<dbReference type="HOGENOM" id="CLU_023982_0_0_5"/>
<dbReference type="UniPathway" id="UPA00219"/>
<dbReference type="Proteomes" id="UP000006575">
    <property type="component" value="Chromosome"/>
</dbReference>
<dbReference type="GO" id="GO:0005886">
    <property type="term" value="C:plasma membrane"/>
    <property type="evidence" value="ECO:0007669"/>
    <property type="project" value="UniProtKB-SubCell"/>
</dbReference>
<dbReference type="GO" id="GO:0046872">
    <property type="term" value="F:metal ion binding"/>
    <property type="evidence" value="ECO:0007669"/>
    <property type="project" value="UniProtKB-KW"/>
</dbReference>
<dbReference type="GO" id="GO:0008963">
    <property type="term" value="F:phospho-N-acetylmuramoyl-pentapeptide-transferase activity"/>
    <property type="evidence" value="ECO:0007669"/>
    <property type="project" value="UniProtKB-UniRule"/>
</dbReference>
<dbReference type="GO" id="GO:0051992">
    <property type="term" value="F:UDP-N-acetylmuramoyl-L-alanyl-D-glutamyl-meso-2,6-diaminopimelyl-D-alanyl-D-alanine:undecaprenyl-phosphate transferase activity"/>
    <property type="evidence" value="ECO:0007669"/>
    <property type="project" value="RHEA"/>
</dbReference>
<dbReference type="GO" id="GO:0051301">
    <property type="term" value="P:cell division"/>
    <property type="evidence" value="ECO:0007669"/>
    <property type="project" value="UniProtKB-KW"/>
</dbReference>
<dbReference type="GO" id="GO:0071555">
    <property type="term" value="P:cell wall organization"/>
    <property type="evidence" value="ECO:0007669"/>
    <property type="project" value="UniProtKB-KW"/>
</dbReference>
<dbReference type="GO" id="GO:0009252">
    <property type="term" value="P:peptidoglycan biosynthetic process"/>
    <property type="evidence" value="ECO:0007669"/>
    <property type="project" value="UniProtKB-UniRule"/>
</dbReference>
<dbReference type="GO" id="GO:0008360">
    <property type="term" value="P:regulation of cell shape"/>
    <property type="evidence" value="ECO:0007669"/>
    <property type="project" value="UniProtKB-KW"/>
</dbReference>
<dbReference type="CDD" id="cd06852">
    <property type="entry name" value="GT_MraY"/>
    <property type="match status" value="1"/>
</dbReference>
<dbReference type="HAMAP" id="MF_00038">
    <property type="entry name" value="MraY"/>
    <property type="match status" value="1"/>
</dbReference>
<dbReference type="InterPro" id="IPR000715">
    <property type="entry name" value="Glycosyl_transferase_4"/>
</dbReference>
<dbReference type="InterPro" id="IPR003524">
    <property type="entry name" value="PNAcMuramoyl-5peptid_Trfase"/>
</dbReference>
<dbReference type="InterPro" id="IPR018480">
    <property type="entry name" value="PNAcMuramoyl-5peptid_Trfase_CS"/>
</dbReference>
<dbReference type="NCBIfam" id="TIGR00445">
    <property type="entry name" value="mraY"/>
    <property type="match status" value="1"/>
</dbReference>
<dbReference type="PANTHER" id="PTHR22926">
    <property type="entry name" value="PHOSPHO-N-ACETYLMURAMOYL-PENTAPEPTIDE-TRANSFERASE"/>
    <property type="match status" value="1"/>
</dbReference>
<dbReference type="PANTHER" id="PTHR22926:SF5">
    <property type="entry name" value="PHOSPHO-N-ACETYLMURAMOYL-PENTAPEPTIDE-TRANSFERASE HOMOLOG"/>
    <property type="match status" value="1"/>
</dbReference>
<dbReference type="Pfam" id="PF00953">
    <property type="entry name" value="Glycos_transf_4"/>
    <property type="match status" value="1"/>
</dbReference>
<dbReference type="Pfam" id="PF10555">
    <property type="entry name" value="MraY_sig1"/>
    <property type="match status" value="1"/>
</dbReference>
<dbReference type="PROSITE" id="PS01347">
    <property type="entry name" value="MRAY_1"/>
    <property type="match status" value="1"/>
</dbReference>
<dbReference type="PROSITE" id="PS01348">
    <property type="entry name" value="MRAY_2"/>
    <property type="match status" value="1"/>
</dbReference>
<protein>
    <recommendedName>
        <fullName evidence="1">Phospho-N-acetylmuramoyl-pentapeptide-transferase</fullName>
        <ecNumber evidence="1">2.7.8.13</ecNumber>
    </recommendedName>
    <alternativeName>
        <fullName evidence="1">UDP-MurNAc-pentapeptide phosphotransferase</fullName>
    </alternativeName>
</protein>
<organism>
    <name type="scientific">Rhizobium johnstonii (strain DSM 114642 / LMG 32736 / 3841)</name>
    <name type="common">Rhizobium leguminosarum bv. viciae</name>
    <dbReference type="NCBI Taxonomy" id="216596"/>
    <lineage>
        <taxon>Bacteria</taxon>
        <taxon>Pseudomonadati</taxon>
        <taxon>Pseudomonadota</taxon>
        <taxon>Alphaproteobacteria</taxon>
        <taxon>Hyphomicrobiales</taxon>
        <taxon>Rhizobiaceae</taxon>
        <taxon>Rhizobium/Agrobacterium group</taxon>
        <taxon>Rhizobium</taxon>
        <taxon>Rhizobium johnstonii</taxon>
    </lineage>
</organism>
<sequence length="366" mass="39032">MLIWLVELSEYFKFLNLFRYITFRTGAALFTSALIVFLFGPTIINSLRIRQGKGQPIRADGPQTHFKKAGTPTMGGLMILAGIVGASLLWADLSNVYVVATLLVTLGFGAIGFYDDYLKVTKQSHMGFSGKARLGIEFVIAGIAVYFMMRTALASGIAGSTFGSSIAFPFFKDFMINIGIMFVVFGGFVIVGAGNAVNLTDGLDGLAIVPVMIAAASFGVIAYLAGNVVFANYLQINFVPGTGELAVVLGAVIGAGLGFLWFNAPPAAIFMGDTGSLALGGTIGTVAVATKHEIVMAIIGGLFVIETLSVIIQVGFFKMTGRRVFLMAPIHHHFEKKGWTESQVVIRFWIVAVGLAMLGLSTLKLR</sequence>
<comment type="function">
    <text evidence="1">Catalyzes the initial step of the lipid cycle reactions in the biosynthesis of the cell wall peptidoglycan: transfers peptidoglycan precursor phospho-MurNAc-pentapeptide from UDP-MurNAc-pentapeptide onto the lipid carrier undecaprenyl phosphate, yielding undecaprenyl-pyrophosphoryl-MurNAc-pentapeptide, known as lipid I.</text>
</comment>
<comment type="catalytic activity">
    <reaction evidence="1">
        <text>UDP-N-acetyl-alpha-D-muramoyl-L-alanyl-gamma-D-glutamyl-meso-2,6-diaminopimeloyl-D-alanyl-D-alanine + di-trans,octa-cis-undecaprenyl phosphate = di-trans,octa-cis-undecaprenyl diphospho-N-acetyl-alpha-D-muramoyl-L-alanyl-D-glutamyl-meso-2,6-diaminopimeloyl-D-alanyl-D-alanine + UMP</text>
        <dbReference type="Rhea" id="RHEA:28386"/>
        <dbReference type="ChEBI" id="CHEBI:57865"/>
        <dbReference type="ChEBI" id="CHEBI:60392"/>
        <dbReference type="ChEBI" id="CHEBI:61386"/>
        <dbReference type="ChEBI" id="CHEBI:61387"/>
        <dbReference type="EC" id="2.7.8.13"/>
    </reaction>
</comment>
<comment type="cofactor">
    <cofactor evidence="1">
        <name>Mg(2+)</name>
        <dbReference type="ChEBI" id="CHEBI:18420"/>
    </cofactor>
</comment>
<comment type="pathway">
    <text evidence="1">Cell wall biogenesis; peptidoglycan biosynthesis.</text>
</comment>
<comment type="subcellular location">
    <subcellularLocation>
        <location evidence="1">Cell inner membrane</location>
        <topology evidence="1">Multi-pass membrane protein</topology>
    </subcellularLocation>
</comment>
<comment type="similarity">
    <text evidence="1">Belongs to the glycosyltransferase 4 family. MraY subfamily.</text>
</comment>
<gene>
    <name evidence="1" type="primary">mraY</name>
    <name type="ordered locus">RL3310</name>
</gene>
<keyword id="KW-0131">Cell cycle</keyword>
<keyword id="KW-0132">Cell division</keyword>
<keyword id="KW-0997">Cell inner membrane</keyword>
<keyword id="KW-1003">Cell membrane</keyword>
<keyword id="KW-0133">Cell shape</keyword>
<keyword id="KW-0961">Cell wall biogenesis/degradation</keyword>
<keyword id="KW-0460">Magnesium</keyword>
<keyword id="KW-0472">Membrane</keyword>
<keyword id="KW-0479">Metal-binding</keyword>
<keyword id="KW-0573">Peptidoglycan synthesis</keyword>
<keyword id="KW-0808">Transferase</keyword>
<keyword id="KW-0812">Transmembrane</keyword>
<keyword id="KW-1133">Transmembrane helix</keyword>
<accession>Q1ME30</accession>
<reference key="1">
    <citation type="journal article" date="2006" name="Genome Biol.">
        <title>The genome of Rhizobium leguminosarum has recognizable core and accessory components.</title>
        <authorList>
            <person name="Young J.P.W."/>
            <person name="Crossman L.C."/>
            <person name="Johnston A.W.B."/>
            <person name="Thomson N.R."/>
            <person name="Ghazoui Z.F."/>
            <person name="Hull K.H."/>
            <person name="Wexler M."/>
            <person name="Curson A.R.J."/>
            <person name="Todd J.D."/>
            <person name="Poole P.S."/>
            <person name="Mauchline T.H."/>
            <person name="East A.K."/>
            <person name="Quail M.A."/>
            <person name="Churcher C."/>
            <person name="Arrowsmith C."/>
            <person name="Cherevach I."/>
            <person name="Chillingworth T."/>
            <person name="Clarke K."/>
            <person name="Cronin A."/>
            <person name="Davis P."/>
            <person name="Fraser A."/>
            <person name="Hance Z."/>
            <person name="Hauser H."/>
            <person name="Jagels K."/>
            <person name="Moule S."/>
            <person name="Mungall K."/>
            <person name="Norbertczak H."/>
            <person name="Rabbinowitsch E."/>
            <person name="Sanders M."/>
            <person name="Simmonds M."/>
            <person name="Whitehead S."/>
            <person name="Parkhill J."/>
        </authorList>
    </citation>
    <scope>NUCLEOTIDE SEQUENCE [LARGE SCALE GENOMIC DNA]</scope>
    <source>
        <strain>DSM 114642 / LMG 32736 / 3841</strain>
    </source>
</reference>
<name>MRAY_RHIJ3</name>
<feature type="chain" id="PRO_1000003038" description="Phospho-N-acetylmuramoyl-pentapeptide-transferase">
    <location>
        <begin position="1"/>
        <end position="366"/>
    </location>
</feature>
<feature type="transmembrane region" description="Helical" evidence="1">
    <location>
        <begin position="27"/>
        <end position="47"/>
    </location>
</feature>
<feature type="transmembrane region" description="Helical" evidence="1">
    <location>
        <begin position="71"/>
        <end position="91"/>
    </location>
</feature>
<feature type="transmembrane region" description="Helical" evidence="1">
    <location>
        <begin position="93"/>
        <end position="113"/>
    </location>
</feature>
<feature type="transmembrane region" description="Helical" evidence="1">
    <location>
        <begin position="138"/>
        <end position="158"/>
    </location>
</feature>
<feature type="transmembrane region" description="Helical" evidence="1">
    <location>
        <begin position="174"/>
        <end position="194"/>
    </location>
</feature>
<feature type="transmembrane region" description="Helical" evidence="1">
    <location>
        <begin position="205"/>
        <end position="225"/>
    </location>
</feature>
<feature type="transmembrane region" description="Helical" evidence="1">
    <location>
        <begin position="245"/>
        <end position="265"/>
    </location>
</feature>
<feature type="transmembrane region" description="Helical" evidence="1">
    <location>
        <begin position="268"/>
        <end position="288"/>
    </location>
</feature>
<feature type="transmembrane region" description="Helical" evidence="1">
    <location>
        <begin position="294"/>
        <end position="314"/>
    </location>
</feature>
<feature type="transmembrane region" description="Helical" evidence="1">
    <location>
        <begin position="343"/>
        <end position="363"/>
    </location>
</feature>
<evidence type="ECO:0000255" key="1">
    <source>
        <dbReference type="HAMAP-Rule" id="MF_00038"/>
    </source>
</evidence>
<proteinExistence type="inferred from homology"/>